<comment type="function">
    <text evidence="1">Has thioltransferase and dehydroascorbate reductase activities.</text>
</comment>
<comment type="subcellular location">
    <subcellularLocation>
        <location>Virion</location>
    </subcellularLocation>
    <text evidence="1">Localizes to the virion core.</text>
</comment>
<comment type="induction">
    <text evidence="2">Expressed in the intermediate phase of the viral replicative cycle.</text>
</comment>
<comment type="similarity">
    <text evidence="4">Belongs to the glutaredoxin family.</text>
</comment>
<gene>
    <name type="primary">OPG075</name>
    <name type="ordered locus">EVM053</name>
</gene>
<feature type="chain" id="PRO_0000141624" description="Glutaredoxin-1">
    <location>
        <begin position="1"/>
        <end position="108"/>
    </location>
</feature>
<feature type="domain" description="Glutaredoxin" evidence="3">
    <location>
        <begin position="3"/>
        <end position="106"/>
    </location>
</feature>
<feature type="disulfide bond" description="Redox-active" evidence="2">
    <location>
        <begin position="23"/>
        <end position="26"/>
    </location>
</feature>
<feature type="helix" evidence="5">
    <location>
        <begin position="2"/>
        <end position="7"/>
    </location>
</feature>
<feature type="strand" evidence="5">
    <location>
        <begin position="15"/>
        <end position="19"/>
    </location>
</feature>
<feature type="helix" evidence="5">
    <location>
        <begin position="24"/>
        <end position="33"/>
    </location>
</feature>
<feature type="strand" evidence="5">
    <location>
        <begin position="42"/>
        <end position="47"/>
    </location>
</feature>
<feature type="helix" evidence="5">
    <location>
        <begin position="48"/>
        <end position="50"/>
    </location>
</feature>
<feature type="strand" evidence="5">
    <location>
        <begin position="51"/>
        <end position="53"/>
    </location>
</feature>
<feature type="helix" evidence="5">
    <location>
        <begin position="54"/>
        <end position="65"/>
    </location>
</feature>
<feature type="strand" evidence="5">
    <location>
        <begin position="72"/>
        <end position="75"/>
    </location>
</feature>
<feature type="strand" evidence="5">
    <location>
        <begin position="78"/>
        <end position="82"/>
    </location>
</feature>
<feature type="helix" evidence="5">
    <location>
        <begin position="83"/>
        <end position="91"/>
    </location>
</feature>
<feature type="helix" evidence="5">
    <location>
        <begin position="95"/>
        <end position="101"/>
    </location>
</feature>
<dbReference type="EMBL" id="AF012825">
    <property type="protein sequence ID" value="AAM92357.1"/>
    <property type="molecule type" value="Genomic_DNA"/>
</dbReference>
<dbReference type="RefSeq" id="NP_671571.1">
    <property type="nucleotide sequence ID" value="NC_004105.1"/>
</dbReference>
<dbReference type="PDB" id="2HZE">
    <property type="method" value="X-ray"/>
    <property type="resolution" value="1.80 A"/>
    <property type="chains" value="A/B=1-108"/>
</dbReference>
<dbReference type="PDB" id="2HZF">
    <property type="method" value="X-ray"/>
    <property type="resolution" value="1.80 A"/>
    <property type="chains" value="A/B=1-108"/>
</dbReference>
<dbReference type="PDBsum" id="2HZE"/>
<dbReference type="PDBsum" id="2HZF"/>
<dbReference type="SMR" id="Q8JLF5"/>
<dbReference type="GeneID" id="951620"/>
<dbReference type="KEGG" id="vg:951620"/>
<dbReference type="EvolutionaryTrace" id="Q8JLF5"/>
<dbReference type="Proteomes" id="UP000172110">
    <property type="component" value="Segment"/>
</dbReference>
<dbReference type="GO" id="GO:0044423">
    <property type="term" value="C:virion component"/>
    <property type="evidence" value="ECO:0007669"/>
    <property type="project" value="UniProtKB-KW"/>
</dbReference>
<dbReference type="GO" id="GO:0015038">
    <property type="term" value="F:glutathione disulfide oxidoreductase activity"/>
    <property type="evidence" value="ECO:0007669"/>
    <property type="project" value="TreeGrafter"/>
</dbReference>
<dbReference type="Gene3D" id="3.40.30.10">
    <property type="entry name" value="Glutaredoxin"/>
    <property type="match status" value="1"/>
</dbReference>
<dbReference type="InterPro" id="IPR011767">
    <property type="entry name" value="GLR_AS"/>
</dbReference>
<dbReference type="InterPro" id="IPR047185">
    <property type="entry name" value="GLRX1"/>
</dbReference>
<dbReference type="InterPro" id="IPR002109">
    <property type="entry name" value="Glutaredoxin"/>
</dbReference>
<dbReference type="InterPro" id="IPR011899">
    <property type="entry name" value="Glutaredoxin_euk/vir"/>
</dbReference>
<dbReference type="InterPro" id="IPR014025">
    <property type="entry name" value="Glutaredoxin_subgr"/>
</dbReference>
<dbReference type="InterPro" id="IPR036249">
    <property type="entry name" value="Thioredoxin-like_sf"/>
</dbReference>
<dbReference type="NCBIfam" id="TIGR02180">
    <property type="entry name" value="GRX_euk"/>
    <property type="match status" value="1"/>
</dbReference>
<dbReference type="PANTHER" id="PTHR46185">
    <property type="entry name" value="GLUTAREDOXIN-1"/>
    <property type="match status" value="1"/>
</dbReference>
<dbReference type="PANTHER" id="PTHR46185:SF1">
    <property type="entry name" value="GLUTAREDOXIN-1"/>
    <property type="match status" value="1"/>
</dbReference>
<dbReference type="Pfam" id="PF00462">
    <property type="entry name" value="Glutaredoxin"/>
    <property type="match status" value="1"/>
</dbReference>
<dbReference type="PRINTS" id="PR00160">
    <property type="entry name" value="GLUTAREDOXIN"/>
</dbReference>
<dbReference type="SUPFAM" id="SSF52833">
    <property type="entry name" value="Thioredoxin-like"/>
    <property type="match status" value="1"/>
</dbReference>
<dbReference type="PROSITE" id="PS00195">
    <property type="entry name" value="GLUTAREDOXIN_1"/>
    <property type="match status" value="1"/>
</dbReference>
<dbReference type="PROSITE" id="PS51354">
    <property type="entry name" value="GLUTAREDOXIN_2"/>
    <property type="match status" value="1"/>
</dbReference>
<sequence>MAEEFVQQRLANNKVTIFVKYTCPFCRNALDILNKFSFKRGAYEIVDIKEFKPENELRDYFEQITGGKTVPRIFFGKTSIGGYSDLLEIDNMDALGDILSSIGVLRTC</sequence>
<keyword id="KW-0002">3D-structure</keyword>
<keyword id="KW-1015">Disulfide bond</keyword>
<keyword id="KW-0249">Electron transport</keyword>
<keyword id="KW-0676">Redox-active center</keyword>
<keyword id="KW-0813">Transport</keyword>
<keyword id="KW-0946">Virion</keyword>
<protein>
    <recommendedName>
        <fullName>Glutaredoxin-1</fullName>
    </recommendedName>
</protein>
<evidence type="ECO:0000250" key="1"/>
<evidence type="ECO:0000250" key="2">
    <source>
        <dbReference type="UniProtKB" id="P68692"/>
    </source>
</evidence>
<evidence type="ECO:0000255" key="3">
    <source>
        <dbReference type="PROSITE-ProRule" id="PRU00686"/>
    </source>
</evidence>
<evidence type="ECO:0000305" key="4"/>
<evidence type="ECO:0007829" key="5">
    <source>
        <dbReference type="PDB" id="2HZE"/>
    </source>
</evidence>
<organism>
    <name type="scientific">Ectromelia virus (strain Moscow)</name>
    <name type="common">ECTV</name>
    <name type="synonym">Mousepox virus</name>
    <dbReference type="NCBI Taxonomy" id="265874"/>
    <lineage>
        <taxon>Viruses</taxon>
        <taxon>Varidnaviria</taxon>
        <taxon>Bamfordvirae</taxon>
        <taxon>Nucleocytoviricota</taxon>
        <taxon>Pokkesviricetes</taxon>
        <taxon>Chitovirales</taxon>
        <taxon>Poxviridae</taxon>
        <taxon>Chordopoxvirinae</taxon>
        <taxon>Orthopoxvirus</taxon>
        <taxon>Ectromelia virus</taxon>
    </lineage>
</organism>
<accession>Q8JLF5</accession>
<reference key="1">
    <citation type="journal article" date="2003" name="Virology">
        <title>The genomic sequence of Ectromelia virus, the causative agent of mousepox.</title>
        <authorList>
            <person name="Chen N."/>
            <person name="Danila M.I."/>
            <person name="Feng Z."/>
            <person name="Buller R.M."/>
            <person name="Wang C."/>
            <person name="Han X."/>
            <person name="Lefkowitz E.J."/>
            <person name="Upton C."/>
        </authorList>
    </citation>
    <scope>NUCLEOTIDE SEQUENCE [LARGE SCALE GENOMIC DNA]</scope>
</reference>
<organismHost>
    <name type="scientific">Mus musculus</name>
    <name type="common">Mouse</name>
    <dbReference type="NCBI Taxonomy" id="10090"/>
</organismHost>
<name>GLRX1_ECTVM</name>
<proteinExistence type="evidence at protein level"/>